<accession>Q6FK47</accession>
<proteinExistence type="inferred from homology"/>
<feature type="chain" id="PRO_0000308718" description="Pre-rRNA-processing protein IPI1">
    <location>
        <begin position="1"/>
        <end position="334"/>
    </location>
</feature>
<feature type="region of interest" description="Disordered" evidence="2">
    <location>
        <begin position="1"/>
        <end position="35"/>
    </location>
</feature>
<feature type="compositionally biased region" description="Basic residues" evidence="2">
    <location>
        <begin position="1"/>
        <end position="21"/>
    </location>
</feature>
<keyword id="KW-0539">Nucleus</keyword>
<keyword id="KW-1185">Reference proteome</keyword>
<keyword id="KW-0690">Ribosome biogenesis</keyword>
<keyword id="KW-0698">rRNA processing</keyword>
<evidence type="ECO:0000250" key="1">
    <source>
        <dbReference type="UniProtKB" id="P38803"/>
    </source>
</evidence>
<evidence type="ECO:0000256" key="2">
    <source>
        <dbReference type="SAM" id="MobiDB-lite"/>
    </source>
</evidence>
<evidence type="ECO:0000305" key="3"/>
<protein>
    <recommendedName>
        <fullName>Pre-rRNA-processing protein IPI1</fullName>
    </recommendedName>
</protein>
<gene>
    <name type="primary">IPI1</name>
    <name type="ordered locus">CAGL0M01210g</name>
</gene>
<name>IPI1_CANGA</name>
<dbReference type="EMBL" id="CR380959">
    <property type="protein sequence ID" value="CAG62373.1"/>
    <property type="molecule type" value="Genomic_DNA"/>
</dbReference>
<dbReference type="RefSeq" id="XP_449397.1">
    <property type="nucleotide sequence ID" value="XM_449397.1"/>
</dbReference>
<dbReference type="SMR" id="Q6FK47"/>
<dbReference type="FunCoup" id="Q6FK47">
    <property type="interactions" value="275"/>
</dbReference>
<dbReference type="STRING" id="284593.Q6FK47"/>
<dbReference type="EnsemblFungi" id="CAGL0M01210g-T">
    <property type="protein sequence ID" value="CAGL0M01210g-T-p1"/>
    <property type="gene ID" value="CAGL0M01210g"/>
</dbReference>
<dbReference type="KEGG" id="cgr:2891167"/>
<dbReference type="CGD" id="CAL0137475">
    <property type="gene designation" value="IPI1"/>
</dbReference>
<dbReference type="VEuPathDB" id="FungiDB:CAGL0M01210g"/>
<dbReference type="eggNOG" id="KOG2149">
    <property type="taxonomic scope" value="Eukaryota"/>
</dbReference>
<dbReference type="HOGENOM" id="CLU_050252_2_0_1"/>
<dbReference type="InParanoid" id="Q6FK47"/>
<dbReference type="OMA" id="CAGGWVK"/>
<dbReference type="Proteomes" id="UP000002428">
    <property type="component" value="Chromosome M"/>
</dbReference>
<dbReference type="GO" id="GO:0005829">
    <property type="term" value="C:cytosol"/>
    <property type="evidence" value="ECO:0007669"/>
    <property type="project" value="EnsemblFungi"/>
</dbReference>
<dbReference type="GO" id="GO:0005654">
    <property type="term" value="C:nucleoplasm"/>
    <property type="evidence" value="ECO:0007669"/>
    <property type="project" value="EnsemblFungi"/>
</dbReference>
<dbReference type="GO" id="GO:0120330">
    <property type="term" value="C:rixosome complex"/>
    <property type="evidence" value="ECO:0007669"/>
    <property type="project" value="EnsemblFungi"/>
</dbReference>
<dbReference type="GO" id="GO:0003682">
    <property type="term" value="F:chromatin binding"/>
    <property type="evidence" value="ECO:0007669"/>
    <property type="project" value="EnsemblFungi"/>
</dbReference>
<dbReference type="GO" id="GO:0000463">
    <property type="term" value="P:maturation of LSU-rRNA from tricistronic rRNA transcript (SSU-rRNA, 5.8S rRNA, LSU-rRNA)"/>
    <property type="evidence" value="ECO:0007669"/>
    <property type="project" value="EnsemblFungi"/>
</dbReference>
<dbReference type="GO" id="GO:0006267">
    <property type="term" value="P:pre-replicative complex assembly involved in nuclear cell cycle DNA replication"/>
    <property type="evidence" value="ECO:0007669"/>
    <property type="project" value="EnsemblFungi"/>
</dbReference>
<dbReference type="GO" id="GO:0030174">
    <property type="term" value="P:regulation of DNA-templated DNA replication initiation"/>
    <property type="evidence" value="ECO:0007669"/>
    <property type="project" value="EnsemblFungi"/>
</dbReference>
<dbReference type="GO" id="GO:0000027">
    <property type="term" value="P:ribosomal large subunit assembly"/>
    <property type="evidence" value="ECO:0007669"/>
    <property type="project" value="EnsemblFungi"/>
</dbReference>
<dbReference type="Gene3D" id="1.25.10.10">
    <property type="entry name" value="Leucine-rich Repeat Variant"/>
    <property type="match status" value="1"/>
</dbReference>
<dbReference type="InterPro" id="IPR011989">
    <property type="entry name" value="ARM-like"/>
</dbReference>
<dbReference type="InterPro" id="IPR016024">
    <property type="entry name" value="ARM-type_fold"/>
</dbReference>
<dbReference type="InterPro" id="IPR024679">
    <property type="entry name" value="Ipi1_N"/>
</dbReference>
<dbReference type="PANTHER" id="PTHR16056">
    <property type="entry name" value="REGULATOR OF MICROTUBULE DYNAMICS PROTEIN"/>
    <property type="match status" value="1"/>
</dbReference>
<dbReference type="PANTHER" id="PTHR16056:SF2">
    <property type="entry name" value="TESTIS-EXPRESSED PROTEIN 10"/>
    <property type="match status" value="1"/>
</dbReference>
<dbReference type="Pfam" id="PF12333">
    <property type="entry name" value="Ipi1_N"/>
    <property type="match status" value="1"/>
</dbReference>
<dbReference type="SUPFAM" id="SSF48371">
    <property type="entry name" value="ARM repeat"/>
    <property type="match status" value="1"/>
</dbReference>
<comment type="function">
    <text evidence="1">Component of the RIX1 complex required for processing of ITS2 sequences from 35S pre-rRNA.</text>
</comment>
<comment type="subunit">
    <text evidence="1">Component of the RIX1 complex, composed of IPI1, RIX1/IPI2 and IPI3 in a 1:2:2 stoichiometry. The complex interacts (via RIX1) with MDN1 (via its hexameric AAA ATPase ring) and the pre-60S ribosome particles.</text>
</comment>
<comment type="subcellular location">
    <subcellularLocation>
        <location evidence="1">Nucleus</location>
    </subcellularLocation>
</comment>
<comment type="similarity">
    <text evidence="3">Belongs to the IPI1/TEX10 family.</text>
</comment>
<organism>
    <name type="scientific">Candida glabrata (strain ATCC 2001 / BCRC 20586 / JCM 3761 / NBRC 0622 / NRRL Y-65 / CBS 138)</name>
    <name type="common">Yeast</name>
    <name type="synonym">Nakaseomyces glabratus</name>
    <dbReference type="NCBI Taxonomy" id="284593"/>
    <lineage>
        <taxon>Eukaryota</taxon>
        <taxon>Fungi</taxon>
        <taxon>Dikarya</taxon>
        <taxon>Ascomycota</taxon>
        <taxon>Saccharomycotina</taxon>
        <taxon>Saccharomycetes</taxon>
        <taxon>Saccharomycetales</taxon>
        <taxon>Saccharomycetaceae</taxon>
        <taxon>Nakaseomyces</taxon>
    </lineage>
</organism>
<sequence>MTKSKKQKQKKKDFLKKKLKVGKPTGKPSNSTDTSFTARTLSVRSQLVNNAGDDLRKRLPLLKHHNDKVRKETLGIYIKAIPKIISTQLMTPLISQTSQLICDDSKDVREQLLELFDEVGKHDEQVLKLHCRSLVLYINMGMTHILPRVQADSTKFLGCLLKYCGQEFCDQAWNKLMAGIFRVLSWETQHSKNSNQAAGAMQTSKRDNKFQAAHLSTLYALLECGCKEPTVETTDEDTTSNIQNFEEVQYMTPSFPQAYGYLKLFDKQLKSSSSNKDNSSVSSSDALDVESRIRNVENVYLPTMKKQIEQIIQEGGEAGKNANNIKKLISEIFS</sequence>
<reference key="1">
    <citation type="journal article" date="2004" name="Nature">
        <title>Genome evolution in yeasts.</title>
        <authorList>
            <person name="Dujon B."/>
            <person name="Sherman D."/>
            <person name="Fischer G."/>
            <person name="Durrens P."/>
            <person name="Casaregola S."/>
            <person name="Lafontaine I."/>
            <person name="de Montigny J."/>
            <person name="Marck C."/>
            <person name="Neuveglise C."/>
            <person name="Talla E."/>
            <person name="Goffard N."/>
            <person name="Frangeul L."/>
            <person name="Aigle M."/>
            <person name="Anthouard V."/>
            <person name="Babour A."/>
            <person name="Barbe V."/>
            <person name="Barnay S."/>
            <person name="Blanchin S."/>
            <person name="Beckerich J.-M."/>
            <person name="Beyne E."/>
            <person name="Bleykasten C."/>
            <person name="Boisrame A."/>
            <person name="Boyer J."/>
            <person name="Cattolico L."/>
            <person name="Confanioleri F."/>
            <person name="de Daruvar A."/>
            <person name="Despons L."/>
            <person name="Fabre E."/>
            <person name="Fairhead C."/>
            <person name="Ferry-Dumazet H."/>
            <person name="Groppi A."/>
            <person name="Hantraye F."/>
            <person name="Hennequin C."/>
            <person name="Jauniaux N."/>
            <person name="Joyet P."/>
            <person name="Kachouri R."/>
            <person name="Kerrest A."/>
            <person name="Koszul R."/>
            <person name="Lemaire M."/>
            <person name="Lesur I."/>
            <person name="Ma L."/>
            <person name="Muller H."/>
            <person name="Nicaud J.-M."/>
            <person name="Nikolski M."/>
            <person name="Oztas S."/>
            <person name="Ozier-Kalogeropoulos O."/>
            <person name="Pellenz S."/>
            <person name="Potier S."/>
            <person name="Richard G.-F."/>
            <person name="Straub M.-L."/>
            <person name="Suleau A."/>
            <person name="Swennen D."/>
            <person name="Tekaia F."/>
            <person name="Wesolowski-Louvel M."/>
            <person name="Westhof E."/>
            <person name="Wirth B."/>
            <person name="Zeniou-Meyer M."/>
            <person name="Zivanovic Y."/>
            <person name="Bolotin-Fukuhara M."/>
            <person name="Thierry A."/>
            <person name="Bouchier C."/>
            <person name="Caudron B."/>
            <person name="Scarpelli C."/>
            <person name="Gaillardin C."/>
            <person name="Weissenbach J."/>
            <person name="Wincker P."/>
            <person name="Souciet J.-L."/>
        </authorList>
    </citation>
    <scope>NUCLEOTIDE SEQUENCE [LARGE SCALE GENOMIC DNA]</scope>
    <source>
        <strain>ATCC 2001 / BCRC 20586 / JCM 3761 / NBRC 0622 / NRRL Y-65 / CBS 138</strain>
    </source>
</reference>